<organism>
    <name type="scientific">Chlamydia trachomatis serovar L2b (strain UCH-1/proctitis)</name>
    <dbReference type="NCBI Taxonomy" id="471473"/>
    <lineage>
        <taxon>Bacteria</taxon>
        <taxon>Pseudomonadati</taxon>
        <taxon>Chlamydiota</taxon>
        <taxon>Chlamydiia</taxon>
        <taxon>Chlamydiales</taxon>
        <taxon>Chlamydiaceae</taxon>
        <taxon>Chlamydia/Chlamydophila group</taxon>
        <taxon>Chlamydia</taxon>
    </lineage>
</organism>
<sequence>MQRYELIRLIGKGGMGEVYLAHDKACSRRVALKRIREDLSGNALLRKRFLREAKIAADLIHPGIVPVYSICSDGEAVYYTMPYIEGFSLKSLLKSVWQKEVLSKELEEKTSVKSFLPIFDKICATVEYIHSKGVLHRDLKPDNILLGLFGEVVIVDWGAAIFKHAKELKLEQDDEAAVSFDERNICYSSMTIPGKIVGTPDYMAPESLLGVEASEKTDIYALGLILYQMLTLAFPYRRKKGRKLSYRDVVLPPIEMSPYREIPPSLSQIAMKAIAINPADRFSSIQELRQALQPYLQGDPEWTVKATLMAKEKSCWKYYDPILLSRYFPVLASSPAQWYNFMLSEVEISASTRVEYTVTKSAVHEGMGILFLPSKEAERGEFYCGYGLWFSVQNHELTVSLIKNGIEIQKKSQEMISQQYRFAILIEKSDNRIAVFVEQALFILHIDYLPSLGNRLGVIIQDLQGMSNIAISESIGALRVSCLAVPDAFLSEKLYDQAAIFYRKIRDSFPGRKESYEAQFRLGVTLLTQIEEQGGDLTQALSSFDYLHGGAGAPLEYLGKALVYQRNGSFVEEIRCLLFALKRYSQHPEIPRLEDHLCFRLYDSLHKHRSEALVFMLLILWIAPEKISVREEKRFLRIIYHKQQATLFCQVDKAPLQFRSSKMELFLSFWTGFSLFLPELFRRAGELRDYQALADIFYVAGVSGNREAFMQFSTALANVSDEITFPESLHNQKVAELMFFVKGVEALRNKDYQKAKKLLWKTPFTLQLYALDIFHIQAFLDEEIESFIDLLQAIYDPASEEERDHILVYIIQTHLWNRDLERAYKLLNDRFPLDEELAEYSEAFILWGCYLALTGDRVAVKAHFSRCRYKYGKSALIGKCVDGDIFDYLDNLVWWEKKMTLFQSYFLLRCLNESPRRYEKYRQAYLSMENNFFD</sequence>
<evidence type="ECO:0000255" key="1">
    <source>
        <dbReference type="HAMAP-Rule" id="MF_01957"/>
    </source>
</evidence>
<comment type="function">
    <text evidence="1">Together with the serine/threonine kinase Pkn1, may play a role in the specific interactions with host proteins during intracellular growth.</text>
</comment>
<comment type="catalytic activity">
    <reaction evidence="1">
        <text>L-seryl-[protein] + ATP = O-phospho-L-seryl-[protein] + ADP + H(+)</text>
        <dbReference type="Rhea" id="RHEA:17989"/>
        <dbReference type="Rhea" id="RHEA-COMP:9863"/>
        <dbReference type="Rhea" id="RHEA-COMP:11604"/>
        <dbReference type="ChEBI" id="CHEBI:15378"/>
        <dbReference type="ChEBI" id="CHEBI:29999"/>
        <dbReference type="ChEBI" id="CHEBI:30616"/>
        <dbReference type="ChEBI" id="CHEBI:83421"/>
        <dbReference type="ChEBI" id="CHEBI:456216"/>
        <dbReference type="EC" id="2.7.11.1"/>
    </reaction>
</comment>
<comment type="catalytic activity">
    <reaction evidence="1">
        <text>L-threonyl-[protein] + ATP = O-phospho-L-threonyl-[protein] + ADP + H(+)</text>
        <dbReference type="Rhea" id="RHEA:46608"/>
        <dbReference type="Rhea" id="RHEA-COMP:11060"/>
        <dbReference type="Rhea" id="RHEA-COMP:11605"/>
        <dbReference type="ChEBI" id="CHEBI:15378"/>
        <dbReference type="ChEBI" id="CHEBI:30013"/>
        <dbReference type="ChEBI" id="CHEBI:30616"/>
        <dbReference type="ChEBI" id="CHEBI:61977"/>
        <dbReference type="ChEBI" id="CHEBI:456216"/>
        <dbReference type="EC" id="2.7.11.1"/>
    </reaction>
</comment>
<comment type="PTM">
    <text evidence="1">Autophosphorylated on serine and threonine residues.</text>
</comment>
<comment type="similarity">
    <text evidence="1">Belongs to the protein kinase superfamily. Ser/Thr protein kinase family.</text>
</comment>
<keyword id="KW-0067">ATP-binding</keyword>
<keyword id="KW-0418">Kinase</keyword>
<keyword id="KW-0547">Nucleotide-binding</keyword>
<keyword id="KW-0597">Phosphoprotein</keyword>
<keyword id="KW-0723">Serine/threonine-protein kinase</keyword>
<keyword id="KW-0808">Transferase</keyword>
<accession>B0BBT2</accession>
<dbReference type="EC" id="2.7.11.1" evidence="1"/>
<dbReference type="EMBL" id="AM884177">
    <property type="protein sequence ID" value="CAP06947.1"/>
    <property type="molecule type" value="Genomic_DNA"/>
</dbReference>
<dbReference type="RefSeq" id="WP_009873709.1">
    <property type="nucleotide sequence ID" value="NC_010280.2"/>
</dbReference>
<dbReference type="SMR" id="B0BBT2"/>
<dbReference type="KEGG" id="ctl:CTLon_0549"/>
<dbReference type="HOGENOM" id="CLU_303227_0_0_0"/>
<dbReference type="Proteomes" id="UP001154401">
    <property type="component" value="Chromosome"/>
</dbReference>
<dbReference type="GO" id="GO:0005524">
    <property type="term" value="F:ATP binding"/>
    <property type="evidence" value="ECO:0007669"/>
    <property type="project" value="UniProtKB-KW"/>
</dbReference>
<dbReference type="GO" id="GO:0106310">
    <property type="term" value="F:protein serine kinase activity"/>
    <property type="evidence" value="ECO:0007669"/>
    <property type="project" value="RHEA"/>
</dbReference>
<dbReference type="GO" id="GO:0004674">
    <property type="term" value="F:protein serine/threonine kinase activity"/>
    <property type="evidence" value="ECO:0007669"/>
    <property type="project" value="UniProtKB-UniRule"/>
</dbReference>
<dbReference type="CDD" id="cd14014">
    <property type="entry name" value="STKc_PknB_like"/>
    <property type="match status" value="1"/>
</dbReference>
<dbReference type="Gene3D" id="3.30.200.20">
    <property type="entry name" value="Phosphorylase Kinase, domain 1"/>
    <property type="match status" value="1"/>
</dbReference>
<dbReference type="Gene3D" id="1.25.40.10">
    <property type="entry name" value="Tetratricopeptide repeat domain"/>
    <property type="match status" value="1"/>
</dbReference>
<dbReference type="Gene3D" id="1.10.510.10">
    <property type="entry name" value="Transferase(Phosphotransferase) domain 1"/>
    <property type="match status" value="1"/>
</dbReference>
<dbReference type="HAMAP" id="MF_01957">
    <property type="entry name" value="PknD_kinase"/>
    <property type="match status" value="1"/>
</dbReference>
<dbReference type="InterPro" id="IPR011009">
    <property type="entry name" value="Kinase-like_dom_sf"/>
</dbReference>
<dbReference type="InterPro" id="IPR000719">
    <property type="entry name" value="Prot_kinase_dom"/>
</dbReference>
<dbReference type="InterPro" id="IPR017441">
    <property type="entry name" value="Protein_kinase_ATP_BS"/>
</dbReference>
<dbReference type="InterPro" id="IPR008271">
    <property type="entry name" value="Ser/Thr_kinase_AS"/>
</dbReference>
<dbReference type="InterPro" id="IPR023507">
    <property type="entry name" value="Ser/Thr_kinase_PknD"/>
</dbReference>
<dbReference type="InterPro" id="IPR011990">
    <property type="entry name" value="TPR-like_helical_dom_sf"/>
</dbReference>
<dbReference type="NCBIfam" id="NF009651">
    <property type="entry name" value="PRK13184.1"/>
    <property type="match status" value="1"/>
</dbReference>
<dbReference type="PANTHER" id="PTHR43289">
    <property type="entry name" value="MITOGEN-ACTIVATED PROTEIN KINASE KINASE KINASE 20-RELATED"/>
    <property type="match status" value="1"/>
</dbReference>
<dbReference type="PANTHER" id="PTHR43289:SF34">
    <property type="entry name" value="SERINE_THREONINE-PROTEIN KINASE YBDM-RELATED"/>
    <property type="match status" value="1"/>
</dbReference>
<dbReference type="Pfam" id="PF00069">
    <property type="entry name" value="Pkinase"/>
    <property type="match status" value="1"/>
</dbReference>
<dbReference type="SMART" id="SM00220">
    <property type="entry name" value="S_TKc"/>
    <property type="match status" value="1"/>
</dbReference>
<dbReference type="SUPFAM" id="SSF56112">
    <property type="entry name" value="Protein kinase-like (PK-like)"/>
    <property type="match status" value="1"/>
</dbReference>
<dbReference type="PROSITE" id="PS00107">
    <property type="entry name" value="PROTEIN_KINASE_ATP"/>
    <property type="match status" value="1"/>
</dbReference>
<dbReference type="PROSITE" id="PS50011">
    <property type="entry name" value="PROTEIN_KINASE_DOM"/>
    <property type="match status" value="1"/>
</dbReference>
<dbReference type="PROSITE" id="PS00108">
    <property type="entry name" value="PROTEIN_KINASE_ST"/>
    <property type="match status" value="1"/>
</dbReference>
<feature type="chain" id="PRO_1000188973" description="Serine/threonine-protein kinase PknD">
    <location>
        <begin position="1"/>
        <end position="934"/>
    </location>
</feature>
<feature type="domain" description="Protein kinase" evidence="1">
    <location>
        <begin position="4"/>
        <end position="296"/>
    </location>
</feature>
<feature type="active site" description="Proton acceptor" evidence="1">
    <location>
        <position position="138"/>
    </location>
</feature>
<feature type="binding site" evidence="1">
    <location>
        <begin position="10"/>
        <end position="18"/>
    </location>
    <ligand>
        <name>ATP</name>
        <dbReference type="ChEBI" id="CHEBI:30616"/>
    </ligand>
</feature>
<feature type="binding site" evidence="1">
    <location>
        <position position="33"/>
    </location>
    <ligand>
        <name>ATP</name>
        <dbReference type="ChEBI" id="CHEBI:30616"/>
    </ligand>
</feature>
<proteinExistence type="inferred from homology"/>
<reference key="1">
    <citation type="journal article" date="2008" name="Genome Res.">
        <title>Chlamydia trachomatis: genome sequence analysis of lymphogranuloma venereum isolates.</title>
        <authorList>
            <person name="Thomson N.R."/>
            <person name="Holden M.T.G."/>
            <person name="Carder C."/>
            <person name="Lennard N."/>
            <person name="Lockey S.J."/>
            <person name="Marsh P."/>
            <person name="Skipp P."/>
            <person name="O'Connor C.D."/>
            <person name="Goodhead I."/>
            <person name="Norbertzcak H."/>
            <person name="Harris B."/>
            <person name="Ormond D."/>
            <person name="Rance R."/>
            <person name="Quail M.A."/>
            <person name="Parkhill J."/>
            <person name="Stephens R.S."/>
            <person name="Clarke I.N."/>
        </authorList>
    </citation>
    <scope>NUCLEOTIDE SEQUENCE [LARGE SCALE GENOMIC DNA]</scope>
    <source>
        <strain>UCH-1/proctitis</strain>
    </source>
</reference>
<protein>
    <recommendedName>
        <fullName evidence="1">Serine/threonine-protein kinase PknD</fullName>
        <ecNumber evidence="1">2.7.11.1</ecNumber>
    </recommendedName>
</protein>
<gene>
    <name evidence="1" type="primary">pknD</name>
    <name type="ordered locus">CTLon_0549</name>
</gene>
<name>PKND_CHLTB</name>